<feature type="chain" id="PRO_1000072432" description="Probable transaldolase">
    <location>
        <begin position="1"/>
        <end position="217"/>
    </location>
</feature>
<feature type="active site" description="Schiff-base intermediate with substrate" evidence="1">
    <location>
        <position position="83"/>
    </location>
</feature>
<dbReference type="EC" id="2.2.1.2" evidence="1"/>
<dbReference type="EMBL" id="CP000771">
    <property type="protein sequence ID" value="ABS61076.1"/>
    <property type="molecule type" value="Genomic_DNA"/>
</dbReference>
<dbReference type="RefSeq" id="WP_011994386.1">
    <property type="nucleotide sequence ID" value="NC_009718.1"/>
</dbReference>
<dbReference type="SMR" id="A7HME3"/>
<dbReference type="STRING" id="381764.Fnod_1229"/>
<dbReference type="KEGG" id="fno:Fnod_1229"/>
<dbReference type="eggNOG" id="COG0176">
    <property type="taxonomic scope" value="Bacteria"/>
</dbReference>
<dbReference type="HOGENOM" id="CLU_079764_0_0_0"/>
<dbReference type="OrthoDB" id="9807051at2"/>
<dbReference type="UniPathway" id="UPA00115">
    <property type="reaction ID" value="UER00414"/>
</dbReference>
<dbReference type="Proteomes" id="UP000002415">
    <property type="component" value="Chromosome"/>
</dbReference>
<dbReference type="GO" id="GO:0005737">
    <property type="term" value="C:cytoplasm"/>
    <property type="evidence" value="ECO:0007669"/>
    <property type="project" value="UniProtKB-SubCell"/>
</dbReference>
<dbReference type="GO" id="GO:0016832">
    <property type="term" value="F:aldehyde-lyase activity"/>
    <property type="evidence" value="ECO:0007669"/>
    <property type="project" value="InterPro"/>
</dbReference>
<dbReference type="GO" id="GO:0004801">
    <property type="term" value="F:transaldolase activity"/>
    <property type="evidence" value="ECO:0007669"/>
    <property type="project" value="UniProtKB-UniRule"/>
</dbReference>
<dbReference type="GO" id="GO:0005975">
    <property type="term" value="P:carbohydrate metabolic process"/>
    <property type="evidence" value="ECO:0007669"/>
    <property type="project" value="InterPro"/>
</dbReference>
<dbReference type="GO" id="GO:0006098">
    <property type="term" value="P:pentose-phosphate shunt"/>
    <property type="evidence" value="ECO:0007669"/>
    <property type="project" value="UniProtKB-UniRule"/>
</dbReference>
<dbReference type="CDD" id="cd00956">
    <property type="entry name" value="Transaldolase_FSA"/>
    <property type="match status" value="1"/>
</dbReference>
<dbReference type="FunFam" id="3.20.20.70:FF:000018">
    <property type="entry name" value="Probable transaldolase"/>
    <property type="match status" value="1"/>
</dbReference>
<dbReference type="Gene3D" id="3.20.20.70">
    <property type="entry name" value="Aldolase class I"/>
    <property type="match status" value="1"/>
</dbReference>
<dbReference type="HAMAP" id="MF_00494">
    <property type="entry name" value="Transaldolase_3b"/>
    <property type="match status" value="1"/>
</dbReference>
<dbReference type="InterPro" id="IPR013785">
    <property type="entry name" value="Aldolase_TIM"/>
</dbReference>
<dbReference type="InterPro" id="IPR001585">
    <property type="entry name" value="TAL/FSA"/>
</dbReference>
<dbReference type="InterPro" id="IPR022999">
    <property type="entry name" value="Transaldolase_3B"/>
</dbReference>
<dbReference type="InterPro" id="IPR004731">
    <property type="entry name" value="Transaldolase_3B/F6P_aldolase"/>
</dbReference>
<dbReference type="InterPro" id="IPR018225">
    <property type="entry name" value="Transaldolase_AS"/>
</dbReference>
<dbReference type="InterPro" id="IPR033919">
    <property type="entry name" value="TSA/FSA_arc/bac"/>
</dbReference>
<dbReference type="NCBIfam" id="TIGR00875">
    <property type="entry name" value="fsa_talC_mipB"/>
    <property type="match status" value="1"/>
</dbReference>
<dbReference type="PANTHER" id="PTHR10683:SF40">
    <property type="entry name" value="FRUCTOSE-6-PHOSPHATE ALDOLASE 1-RELATED"/>
    <property type="match status" value="1"/>
</dbReference>
<dbReference type="PANTHER" id="PTHR10683">
    <property type="entry name" value="TRANSALDOLASE"/>
    <property type="match status" value="1"/>
</dbReference>
<dbReference type="Pfam" id="PF00923">
    <property type="entry name" value="TAL_FSA"/>
    <property type="match status" value="1"/>
</dbReference>
<dbReference type="SUPFAM" id="SSF51569">
    <property type="entry name" value="Aldolase"/>
    <property type="match status" value="1"/>
</dbReference>
<dbReference type="PROSITE" id="PS01054">
    <property type="entry name" value="TRANSALDOLASE_1"/>
    <property type="match status" value="1"/>
</dbReference>
<dbReference type="PROSITE" id="PS00958">
    <property type="entry name" value="TRANSALDOLASE_2"/>
    <property type="match status" value="1"/>
</dbReference>
<evidence type="ECO:0000255" key="1">
    <source>
        <dbReference type="HAMAP-Rule" id="MF_00494"/>
    </source>
</evidence>
<protein>
    <recommendedName>
        <fullName evidence="1">Probable transaldolase</fullName>
        <ecNumber evidence="1">2.2.1.2</ecNumber>
    </recommendedName>
</protein>
<reference key="1">
    <citation type="submission" date="2007-07" db="EMBL/GenBank/DDBJ databases">
        <title>Complete sequence of Fervidobacterium nodosum Rt17-B1.</title>
        <authorList>
            <consortium name="US DOE Joint Genome Institute"/>
            <person name="Copeland A."/>
            <person name="Lucas S."/>
            <person name="Lapidus A."/>
            <person name="Barry K."/>
            <person name="Glavina del Rio T."/>
            <person name="Dalin E."/>
            <person name="Tice H."/>
            <person name="Pitluck S."/>
            <person name="Saunders E."/>
            <person name="Brettin T."/>
            <person name="Bruce D."/>
            <person name="Detter J.C."/>
            <person name="Han C."/>
            <person name="Schmutz J."/>
            <person name="Larimer F."/>
            <person name="Land M."/>
            <person name="Hauser L."/>
            <person name="Kyrpides N."/>
            <person name="Mikhailova N."/>
            <person name="Nelson K."/>
            <person name="Gogarten J.P."/>
            <person name="Noll K."/>
            <person name="Richardson P."/>
        </authorList>
    </citation>
    <scope>NUCLEOTIDE SEQUENCE [LARGE SCALE GENOMIC DNA]</scope>
    <source>
        <strain>ATCC 35602 / DSM 5306 / Rt17-B1</strain>
    </source>
</reference>
<comment type="function">
    <text evidence="1">Transaldolase is important for the balance of metabolites in the pentose-phosphate pathway.</text>
</comment>
<comment type="catalytic activity">
    <reaction evidence="1">
        <text>D-sedoheptulose 7-phosphate + D-glyceraldehyde 3-phosphate = D-erythrose 4-phosphate + beta-D-fructose 6-phosphate</text>
        <dbReference type="Rhea" id="RHEA:17053"/>
        <dbReference type="ChEBI" id="CHEBI:16897"/>
        <dbReference type="ChEBI" id="CHEBI:57483"/>
        <dbReference type="ChEBI" id="CHEBI:57634"/>
        <dbReference type="ChEBI" id="CHEBI:59776"/>
        <dbReference type="EC" id="2.2.1.2"/>
    </reaction>
</comment>
<comment type="pathway">
    <text evidence="1">Carbohydrate degradation; pentose phosphate pathway; D-glyceraldehyde 3-phosphate and beta-D-fructose 6-phosphate from D-ribose 5-phosphate and D-xylulose 5-phosphate (non-oxidative stage): step 2/3.</text>
</comment>
<comment type="subcellular location">
    <subcellularLocation>
        <location evidence="1">Cytoplasm</location>
    </subcellularLocation>
</comment>
<comment type="similarity">
    <text evidence="1">Belongs to the transaldolase family. Type 3B subfamily.</text>
</comment>
<sequence>MKIFLDTANIDEIRQGVEWGIVDGVTTNPTLISKEGADFEKRIKEICELVQGPVSAEVISLKWDEMVEEARKLASIDDFVVVKIPMTPDGIKAVKILSAEGIKTNVTLVFSANQALLAAKAGATYVSPFIGRIDDNGNDGLRLLEEIMQIYTNYGFETEVIAASVRHPMHVVEAAMIGVDIATIPFDVLKKMFLHPLTDVGIKRFLQDWEEYKKNKK</sequence>
<name>TAL_FERNB</name>
<organism>
    <name type="scientific">Fervidobacterium nodosum (strain ATCC 35602 / DSM 5306 / Rt17-B1)</name>
    <dbReference type="NCBI Taxonomy" id="381764"/>
    <lineage>
        <taxon>Bacteria</taxon>
        <taxon>Thermotogati</taxon>
        <taxon>Thermotogota</taxon>
        <taxon>Thermotogae</taxon>
        <taxon>Thermotogales</taxon>
        <taxon>Fervidobacteriaceae</taxon>
        <taxon>Fervidobacterium</taxon>
    </lineage>
</organism>
<accession>A7HME3</accession>
<keyword id="KW-0963">Cytoplasm</keyword>
<keyword id="KW-0570">Pentose shunt</keyword>
<keyword id="KW-1185">Reference proteome</keyword>
<keyword id="KW-0704">Schiff base</keyword>
<keyword id="KW-0808">Transferase</keyword>
<gene>
    <name evidence="1" type="primary">tal</name>
    <name type="ordered locus">Fnod_1229</name>
</gene>
<proteinExistence type="inferred from homology"/>